<dbReference type="EMBL" id="AAFI02000030">
    <property type="protein sequence ID" value="EAL67775.1"/>
    <property type="molecule type" value="Genomic_DNA"/>
</dbReference>
<dbReference type="RefSeq" id="XP_641753.1">
    <property type="nucleotide sequence ID" value="XM_636661.1"/>
</dbReference>
<dbReference type="SMR" id="Q54X24"/>
<dbReference type="PaxDb" id="44689-DDB0235366"/>
<dbReference type="EnsemblProtists" id="EAL67775">
    <property type="protein sequence ID" value="EAL67775"/>
    <property type="gene ID" value="DDB_G0279253"/>
</dbReference>
<dbReference type="GeneID" id="8621951"/>
<dbReference type="KEGG" id="ddi:DDB_G0279253"/>
<dbReference type="dictyBase" id="DDB_G0279253"/>
<dbReference type="VEuPathDB" id="AmoebaDB:DDB_G0279253"/>
<dbReference type="eggNOG" id="KOG1426">
    <property type="taxonomic scope" value="Eukaryota"/>
</dbReference>
<dbReference type="HOGENOM" id="CLU_040870_0_0_1"/>
<dbReference type="InParanoid" id="Q54X24"/>
<dbReference type="OMA" id="GWNEHFQ"/>
<dbReference type="PhylomeDB" id="Q54X24"/>
<dbReference type="PRO" id="PR:Q54X24"/>
<dbReference type="Proteomes" id="UP000002195">
    <property type="component" value="Chromosome 3"/>
</dbReference>
<dbReference type="Gene3D" id="2.130.10.30">
    <property type="entry name" value="Regulator of chromosome condensation 1/beta-lactamase-inhibitor protein II"/>
    <property type="match status" value="3"/>
</dbReference>
<dbReference type="InterPro" id="IPR009091">
    <property type="entry name" value="RCC1/BLIP-II"/>
</dbReference>
<dbReference type="InterPro" id="IPR000408">
    <property type="entry name" value="Reg_chr_condens"/>
</dbReference>
<dbReference type="InterPro" id="IPR051210">
    <property type="entry name" value="Ub_ligase/GEF_domain"/>
</dbReference>
<dbReference type="PANTHER" id="PTHR22870:SF408">
    <property type="entry name" value="OS09G0560450 PROTEIN"/>
    <property type="match status" value="1"/>
</dbReference>
<dbReference type="PANTHER" id="PTHR22870">
    <property type="entry name" value="REGULATOR OF CHROMOSOME CONDENSATION"/>
    <property type="match status" value="1"/>
</dbReference>
<dbReference type="Pfam" id="PF00415">
    <property type="entry name" value="RCC1"/>
    <property type="match status" value="1"/>
</dbReference>
<dbReference type="Pfam" id="PF13540">
    <property type="entry name" value="RCC1_2"/>
    <property type="match status" value="1"/>
</dbReference>
<dbReference type="Pfam" id="PF25390">
    <property type="entry name" value="WD40_RLD"/>
    <property type="match status" value="1"/>
</dbReference>
<dbReference type="PRINTS" id="PR00633">
    <property type="entry name" value="RCCNDNSATION"/>
</dbReference>
<dbReference type="SUPFAM" id="SSF81995">
    <property type="entry name" value="beta-sandwich domain of Sec23/24"/>
    <property type="match status" value="1"/>
</dbReference>
<dbReference type="SUPFAM" id="SSF50985">
    <property type="entry name" value="RCC1/BLIP-II"/>
    <property type="match status" value="1"/>
</dbReference>
<dbReference type="PROSITE" id="PS00626">
    <property type="entry name" value="RCC1_2"/>
    <property type="match status" value="2"/>
</dbReference>
<dbReference type="PROSITE" id="PS50012">
    <property type="entry name" value="RCC1_3"/>
    <property type="match status" value="5"/>
</dbReference>
<sequence length="512" mass="56826">MKIYSWGSGNLGQLGIGNTDDSVSTPTLVLPPDGKKDYEIVNDIVGGGCHSMMIIDNGDLYTFGSNDSGQLGINSNEQQQQQQQQQQQQQQQQQQQQQQQQYQTIPTILNYFKINSIKIKNCSGGWAHSLACDNNGNIYSWGSNSHGQLGIDTTCSLNSTLSTSNNKNNNNNNNNNNNNNNNNNNNNNNNNNNNNNSGGVIKKKIVLKKKKVERKNLNEPKLIEILFNNKIRIVSVSCGMRHSIALSSENDVYGWGCNKFGQLSNLIDGNSLKSNNNNNNINDIADPMVQDSPKLINFKNEIKIIQISCGFQHTLLLDINFKNVLSFGQNKFGQLGNGNFIDQSNPCVIDISSFILPTSTSKSLNDIKIKEIQCGWSNSCLLTNQDKLYICGRGEYGILGDNRDLSLDNSNSNQFKLLNSESFNENKIKNFSIGSEHILIQVYSNDNNNNNNNNNNIYSFGWNEHYQLGLCEPIIIGKDGDNKSFPQLLPSIKGNDKSLVKAGGGNSFFILP</sequence>
<accession>Q54X24</accession>
<reference key="1">
    <citation type="journal article" date="2005" name="Nature">
        <title>The genome of the social amoeba Dictyostelium discoideum.</title>
        <authorList>
            <person name="Eichinger L."/>
            <person name="Pachebat J.A."/>
            <person name="Gloeckner G."/>
            <person name="Rajandream M.A."/>
            <person name="Sucgang R."/>
            <person name="Berriman M."/>
            <person name="Song J."/>
            <person name="Olsen R."/>
            <person name="Szafranski K."/>
            <person name="Xu Q."/>
            <person name="Tunggal B."/>
            <person name="Kummerfeld S."/>
            <person name="Madera M."/>
            <person name="Konfortov B.A."/>
            <person name="Rivero F."/>
            <person name="Bankier A.T."/>
            <person name="Lehmann R."/>
            <person name="Hamlin N."/>
            <person name="Davies R."/>
            <person name="Gaudet P."/>
            <person name="Fey P."/>
            <person name="Pilcher K."/>
            <person name="Chen G."/>
            <person name="Saunders D."/>
            <person name="Sodergren E.J."/>
            <person name="Davis P."/>
            <person name="Kerhornou A."/>
            <person name="Nie X."/>
            <person name="Hall N."/>
            <person name="Anjard C."/>
            <person name="Hemphill L."/>
            <person name="Bason N."/>
            <person name="Farbrother P."/>
            <person name="Desany B."/>
            <person name="Just E."/>
            <person name="Morio T."/>
            <person name="Rost R."/>
            <person name="Churcher C.M."/>
            <person name="Cooper J."/>
            <person name="Haydock S."/>
            <person name="van Driessche N."/>
            <person name="Cronin A."/>
            <person name="Goodhead I."/>
            <person name="Muzny D.M."/>
            <person name="Mourier T."/>
            <person name="Pain A."/>
            <person name="Lu M."/>
            <person name="Harper D."/>
            <person name="Lindsay R."/>
            <person name="Hauser H."/>
            <person name="James K.D."/>
            <person name="Quiles M."/>
            <person name="Madan Babu M."/>
            <person name="Saito T."/>
            <person name="Buchrieser C."/>
            <person name="Wardroper A."/>
            <person name="Felder M."/>
            <person name="Thangavelu M."/>
            <person name="Johnson D."/>
            <person name="Knights A."/>
            <person name="Loulseged H."/>
            <person name="Mungall K.L."/>
            <person name="Oliver K."/>
            <person name="Price C."/>
            <person name="Quail M.A."/>
            <person name="Urushihara H."/>
            <person name="Hernandez J."/>
            <person name="Rabbinowitsch E."/>
            <person name="Steffen D."/>
            <person name="Sanders M."/>
            <person name="Ma J."/>
            <person name="Kohara Y."/>
            <person name="Sharp S."/>
            <person name="Simmonds M.N."/>
            <person name="Spiegler S."/>
            <person name="Tivey A."/>
            <person name="Sugano S."/>
            <person name="White B."/>
            <person name="Walker D."/>
            <person name="Woodward J.R."/>
            <person name="Winckler T."/>
            <person name="Tanaka Y."/>
            <person name="Shaulsky G."/>
            <person name="Schleicher M."/>
            <person name="Weinstock G.M."/>
            <person name="Rosenthal A."/>
            <person name="Cox E.C."/>
            <person name="Chisholm R.L."/>
            <person name="Gibbs R.A."/>
            <person name="Loomis W.F."/>
            <person name="Platzer M."/>
            <person name="Kay R.R."/>
            <person name="Williams J.G."/>
            <person name="Dear P.H."/>
            <person name="Noegel A.A."/>
            <person name="Barrell B.G."/>
            <person name="Kuspa A."/>
        </authorList>
    </citation>
    <scope>NUCLEOTIDE SEQUENCE [LARGE SCALE GENOMIC DNA]</scope>
    <source>
        <strain>AX4</strain>
    </source>
</reference>
<protein>
    <recommendedName>
        <fullName>RCC1 domain-containing protein DDB_G0279253</fullName>
    </recommendedName>
</protein>
<organism>
    <name type="scientific">Dictyostelium discoideum</name>
    <name type="common">Social amoeba</name>
    <dbReference type="NCBI Taxonomy" id="44689"/>
    <lineage>
        <taxon>Eukaryota</taxon>
        <taxon>Amoebozoa</taxon>
        <taxon>Evosea</taxon>
        <taxon>Eumycetozoa</taxon>
        <taxon>Dictyostelia</taxon>
        <taxon>Dictyosteliales</taxon>
        <taxon>Dictyosteliaceae</taxon>
        <taxon>Dictyostelium</taxon>
    </lineage>
</organism>
<evidence type="ECO:0000256" key="1">
    <source>
        <dbReference type="SAM" id="MobiDB-lite"/>
    </source>
</evidence>
<feature type="chain" id="PRO_0000356176" description="RCC1 domain-containing protein DDB_G0279253">
    <location>
        <begin position="1"/>
        <end position="512"/>
    </location>
</feature>
<feature type="repeat" description="RCC1 1">
    <location>
        <begin position="1"/>
        <end position="56"/>
    </location>
</feature>
<feature type="repeat" description="RCC1 2">
    <location>
        <begin position="58"/>
        <end position="134"/>
    </location>
</feature>
<feature type="repeat" description="RCC1 3">
    <location>
        <begin position="135"/>
        <end position="185"/>
    </location>
</feature>
<feature type="repeat" description="RCC1 4">
    <location>
        <begin position="197"/>
        <end position="248"/>
    </location>
</feature>
<feature type="repeat" description="RCC1 5">
    <location>
        <begin position="249"/>
        <end position="319"/>
    </location>
</feature>
<feature type="repeat" description="RCC1 6">
    <location>
        <begin position="321"/>
        <end position="384"/>
    </location>
</feature>
<feature type="repeat" description="RCC1 7">
    <location>
        <begin position="386"/>
        <end position="443"/>
    </location>
</feature>
<feature type="repeat" description="RCC1 8">
    <location>
        <begin position="454"/>
        <end position="512"/>
    </location>
</feature>
<feature type="region of interest" description="Disordered" evidence="1">
    <location>
        <begin position="66"/>
        <end position="85"/>
    </location>
</feature>
<feature type="region of interest" description="Disordered" evidence="1">
    <location>
        <begin position="162"/>
        <end position="200"/>
    </location>
</feature>
<feature type="compositionally biased region" description="Polar residues" evidence="1">
    <location>
        <begin position="66"/>
        <end position="77"/>
    </location>
</feature>
<feature type="compositionally biased region" description="Low complexity" evidence="1">
    <location>
        <begin position="162"/>
        <end position="196"/>
    </location>
</feature>
<gene>
    <name type="ORF">DDB_G0279253</name>
</gene>
<proteinExistence type="predicted"/>
<keyword id="KW-1185">Reference proteome</keyword>
<keyword id="KW-0677">Repeat</keyword>
<name>RCCDA_DICDI</name>